<gene>
    <name evidence="1" type="primary">rpoB</name>
    <name type="ordered locus">PSPA7_0830</name>
</gene>
<feature type="chain" id="PRO_1000051973" description="DNA-directed RNA polymerase subunit beta">
    <location>
        <begin position="1"/>
        <end position="1357"/>
    </location>
</feature>
<sequence>MAYSYTEKKRIRKDFSKLPDVMDVPYLLAIQLDSYREFLQAGATKEQFRDIGLHAAFKSVFPIISYSGNAALEYVGYRLGEPAFDVKECVLRGVTFAVPLRVKVRLIIFDRESSNKAIKDIKEQEVYMGEIPLMTENGTFIINGTERVIVSQLHRSPGVFFDHDRGKTHSSGKLLYSARIIPYRGSWLDFEFDPKDCVFVRIDRRRKLPASVLLRALGYSTEEILNAFYATNVFHIKGETLNLELVPQRLRGEVASIDIKDGSGKVIVEQGRRITARHINQLEKAGVTQLEVPFDYLIGRTIAKAIVHPATGEIIAECNTELTLDLLAKVAKAQVVRIETLYTNDIDCGPFISDTLKIDNTSNQLEALVEIYRMMRPGEPPTKEAAETLFGNLFFSAERYDLSAVGRMKFNRRIGRTEIEGPGVLSKEDIIDVLKTLVDIRNGKGIVDDIDHLGNRRVRCVGEMAENQFRVGLVRVERAVKERLSMAESEGLMPQDLINAKPVAAAIKEFFGSSQLSQFMDQNNPLSEITHKRRVSALGPGGLTRERAGFEVRDVHPTHYGRVCPIETPEGPNIGLINSLATYARTNKYGFLESPYRVVKDSLVTDEIVFLSAIEEADHVIAQASATLNEKGQLVDELVAVRHLNEFTVKAPEDVTLMDVSPKQVVSVAASLIPFLEHDDANRALMGSNMQRQAVPTLRADKPLVGTGMERNVARDSGVCVVARRGGVIDSVDASRVVVRVADDEVETGEAGVDIYNLTKYTRSNQNTCINQRPLVSKGDVVARGDILADGPSTDMGELALGQNMRVAFMPWNGFNFEDSICLSERVVQEDRFTTIHIQELTCVARDTKLGPEEITADIPNVGEAALNKLDEAGIVYVGAEVQAGDILVGKVTPKGETQLTPEEKLLRAIFGEKASDVKDTSLRVPTGTKGTVIDVQVFTRDGVERDSRALSIEKMQLDQIRKDLNEEFRIVEGATFERLRAALVGAKAEGGPALKKGTEITDDYLDGLERGQWFKLRMADDALNEQLEKAQAYISDRRQLLDDKFEDKKRKLQQGDDLAPGVLKIVKVYLAIKRRIQPGDKMAGRHGNKGVVSVIMPVEDMPHDANGTPVDIVLNPLGVPSRMNVGQILETHLGLAAKGLGEKINRMLEEQRKVAELRKFLHEIYNEIGGREENLDELGDNEILALAKNLRGGVPMATPVFDGAKEREIKAMLKLADLPESGQMRLFDGRTGNQFERPTTVGYMYMLKLNHLVDDKMHARSTGSYSLVTQQPLGGKAQFGGQRFGEMEVWALEAYGAAYTLQEMLTVKSDDVNGRTKMYKNIVDGDHRMEAGMPESFNVLIKEIRSLGIDIELETE</sequence>
<protein>
    <recommendedName>
        <fullName evidence="1">DNA-directed RNA polymerase subunit beta</fullName>
        <shortName evidence="1">RNAP subunit beta</shortName>
        <ecNumber evidence="1">2.7.7.6</ecNumber>
    </recommendedName>
    <alternativeName>
        <fullName evidence="1">RNA polymerase subunit beta</fullName>
    </alternativeName>
    <alternativeName>
        <fullName evidence="1">Transcriptase subunit beta</fullName>
    </alternativeName>
</protein>
<keyword id="KW-0240">DNA-directed RNA polymerase</keyword>
<keyword id="KW-0548">Nucleotidyltransferase</keyword>
<keyword id="KW-0804">Transcription</keyword>
<keyword id="KW-0808">Transferase</keyword>
<reference key="1">
    <citation type="submission" date="2007-06" db="EMBL/GenBank/DDBJ databases">
        <authorList>
            <person name="Dodson R.J."/>
            <person name="Harkins D."/>
            <person name="Paulsen I.T."/>
        </authorList>
    </citation>
    <scope>NUCLEOTIDE SEQUENCE [LARGE SCALE GENOMIC DNA]</scope>
    <source>
        <strain>DSM 24068 / PA7</strain>
    </source>
</reference>
<dbReference type="EC" id="2.7.7.6" evidence="1"/>
<dbReference type="EMBL" id="CP000744">
    <property type="protein sequence ID" value="ABR81670.1"/>
    <property type="molecule type" value="Genomic_DNA"/>
</dbReference>
<dbReference type="RefSeq" id="WP_012074226.1">
    <property type="nucleotide sequence ID" value="NC_009656.1"/>
</dbReference>
<dbReference type="SMR" id="A6UZI1"/>
<dbReference type="GeneID" id="77219191"/>
<dbReference type="KEGG" id="pap:PSPA7_0830"/>
<dbReference type="HOGENOM" id="CLU_000524_4_0_6"/>
<dbReference type="Proteomes" id="UP000001582">
    <property type="component" value="Chromosome"/>
</dbReference>
<dbReference type="GO" id="GO:0000428">
    <property type="term" value="C:DNA-directed RNA polymerase complex"/>
    <property type="evidence" value="ECO:0007669"/>
    <property type="project" value="UniProtKB-KW"/>
</dbReference>
<dbReference type="GO" id="GO:0003677">
    <property type="term" value="F:DNA binding"/>
    <property type="evidence" value="ECO:0007669"/>
    <property type="project" value="UniProtKB-UniRule"/>
</dbReference>
<dbReference type="GO" id="GO:0003899">
    <property type="term" value="F:DNA-directed RNA polymerase activity"/>
    <property type="evidence" value="ECO:0007669"/>
    <property type="project" value="UniProtKB-UniRule"/>
</dbReference>
<dbReference type="GO" id="GO:0032549">
    <property type="term" value="F:ribonucleoside binding"/>
    <property type="evidence" value="ECO:0007669"/>
    <property type="project" value="InterPro"/>
</dbReference>
<dbReference type="GO" id="GO:0006351">
    <property type="term" value="P:DNA-templated transcription"/>
    <property type="evidence" value="ECO:0007669"/>
    <property type="project" value="UniProtKB-UniRule"/>
</dbReference>
<dbReference type="CDD" id="cd00653">
    <property type="entry name" value="RNA_pol_B_RPB2"/>
    <property type="match status" value="1"/>
</dbReference>
<dbReference type="FunFam" id="2.40.50.100:FF:000006">
    <property type="entry name" value="DNA-directed RNA polymerase subunit beta"/>
    <property type="match status" value="1"/>
</dbReference>
<dbReference type="FunFam" id="2.40.50.150:FF:000001">
    <property type="entry name" value="DNA-directed RNA polymerase subunit beta"/>
    <property type="match status" value="1"/>
</dbReference>
<dbReference type="FunFam" id="3.90.1110.10:FF:000001">
    <property type="entry name" value="DNA-directed RNA polymerase subunit beta"/>
    <property type="match status" value="1"/>
</dbReference>
<dbReference type="FunFam" id="3.90.1110.10:FF:000004">
    <property type="entry name" value="DNA-directed RNA polymerase subunit beta"/>
    <property type="match status" value="1"/>
</dbReference>
<dbReference type="FunFam" id="3.90.1800.10:FF:000001">
    <property type="entry name" value="DNA-directed RNA polymerase subunit beta"/>
    <property type="match status" value="1"/>
</dbReference>
<dbReference type="Gene3D" id="2.40.50.100">
    <property type="match status" value="1"/>
</dbReference>
<dbReference type="Gene3D" id="2.40.50.150">
    <property type="match status" value="1"/>
</dbReference>
<dbReference type="Gene3D" id="3.90.1100.10">
    <property type="match status" value="2"/>
</dbReference>
<dbReference type="Gene3D" id="6.10.140.1670">
    <property type="match status" value="1"/>
</dbReference>
<dbReference type="Gene3D" id="2.30.150.10">
    <property type="entry name" value="DNA-directed RNA polymerase, beta subunit, external 1 domain"/>
    <property type="match status" value="1"/>
</dbReference>
<dbReference type="Gene3D" id="2.40.270.10">
    <property type="entry name" value="DNA-directed RNA polymerase, subunit 2, domain 6"/>
    <property type="match status" value="1"/>
</dbReference>
<dbReference type="Gene3D" id="3.90.1800.10">
    <property type="entry name" value="RNA polymerase alpha subunit dimerisation domain"/>
    <property type="match status" value="1"/>
</dbReference>
<dbReference type="Gene3D" id="3.90.1110.10">
    <property type="entry name" value="RNA polymerase Rpb2, domain 2"/>
    <property type="match status" value="1"/>
</dbReference>
<dbReference type="HAMAP" id="MF_01321">
    <property type="entry name" value="RNApol_bact_RpoB"/>
    <property type="match status" value="1"/>
</dbReference>
<dbReference type="InterPro" id="IPR042107">
    <property type="entry name" value="DNA-dir_RNA_pol_bsu_ext_1_sf"/>
</dbReference>
<dbReference type="InterPro" id="IPR019462">
    <property type="entry name" value="DNA-dir_RNA_pol_bsu_external_1"/>
</dbReference>
<dbReference type="InterPro" id="IPR015712">
    <property type="entry name" value="DNA-dir_RNA_pol_su2"/>
</dbReference>
<dbReference type="InterPro" id="IPR007120">
    <property type="entry name" value="DNA-dir_RNAP_su2_dom"/>
</dbReference>
<dbReference type="InterPro" id="IPR037033">
    <property type="entry name" value="DNA-dir_RNAP_su2_hyb_sf"/>
</dbReference>
<dbReference type="InterPro" id="IPR010243">
    <property type="entry name" value="RNA_pol_bsu_bac"/>
</dbReference>
<dbReference type="InterPro" id="IPR007121">
    <property type="entry name" value="RNA_pol_bsu_CS"/>
</dbReference>
<dbReference type="InterPro" id="IPR007644">
    <property type="entry name" value="RNA_pol_bsu_protrusion"/>
</dbReference>
<dbReference type="InterPro" id="IPR007642">
    <property type="entry name" value="RNA_pol_Rpb2_2"/>
</dbReference>
<dbReference type="InterPro" id="IPR037034">
    <property type="entry name" value="RNA_pol_Rpb2_2_sf"/>
</dbReference>
<dbReference type="InterPro" id="IPR007645">
    <property type="entry name" value="RNA_pol_Rpb2_3"/>
</dbReference>
<dbReference type="InterPro" id="IPR007641">
    <property type="entry name" value="RNA_pol_Rpb2_7"/>
</dbReference>
<dbReference type="InterPro" id="IPR014724">
    <property type="entry name" value="RNA_pol_RPB2_OB-fold"/>
</dbReference>
<dbReference type="NCBIfam" id="NF001616">
    <property type="entry name" value="PRK00405.1"/>
    <property type="match status" value="1"/>
</dbReference>
<dbReference type="NCBIfam" id="TIGR02013">
    <property type="entry name" value="rpoB"/>
    <property type="match status" value="1"/>
</dbReference>
<dbReference type="PANTHER" id="PTHR20856">
    <property type="entry name" value="DNA-DIRECTED RNA POLYMERASE I SUBUNIT 2"/>
    <property type="match status" value="1"/>
</dbReference>
<dbReference type="Pfam" id="PF04563">
    <property type="entry name" value="RNA_pol_Rpb2_1"/>
    <property type="match status" value="1"/>
</dbReference>
<dbReference type="Pfam" id="PF04561">
    <property type="entry name" value="RNA_pol_Rpb2_2"/>
    <property type="match status" value="2"/>
</dbReference>
<dbReference type="Pfam" id="PF04565">
    <property type="entry name" value="RNA_pol_Rpb2_3"/>
    <property type="match status" value="1"/>
</dbReference>
<dbReference type="Pfam" id="PF10385">
    <property type="entry name" value="RNA_pol_Rpb2_45"/>
    <property type="match status" value="1"/>
</dbReference>
<dbReference type="Pfam" id="PF00562">
    <property type="entry name" value="RNA_pol_Rpb2_6"/>
    <property type="match status" value="1"/>
</dbReference>
<dbReference type="Pfam" id="PF04560">
    <property type="entry name" value="RNA_pol_Rpb2_7"/>
    <property type="match status" value="1"/>
</dbReference>
<dbReference type="SUPFAM" id="SSF64484">
    <property type="entry name" value="beta and beta-prime subunits of DNA dependent RNA-polymerase"/>
    <property type="match status" value="1"/>
</dbReference>
<dbReference type="PROSITE" id="PS01166">
    <property type="entry name" value="RNA_POL_BETA"/>
    <property type="match status" value="1"/>
</dbReference>
<organism>
    <name type="scientific">Pseudomonas paraeruginosa (strain DSM 24068 / PA7)</name>
    <name type="common">Pseudomonas aeruginosa (strain PA7)</name>
    <dbReference type="NCBI Taxonomy" id="381754"/>
    <lineage>
        <taxon>Bacteria</taxon>
        <taxon>Pseudomonadati</taxon>
        <taxon>Pseudomonadota</taxon>
        <taxon>Gammaproteobacteria</taxon>
        <taxon>Pseudomonadales</taxon>
        <taxon>Pseudomonadaceae</taxon>
        <taxon>Pseudomonas</taxon>
        <taxon>Pseudomonas paraeruginosa</taxon>
    </lineage>
</organism>
<evidence type="ECO:0000255" key="1">
    <source>
        <dbReference type="HAMAP-Rule" id="MF_01321"/>
    </source>
</evidence>
<name>RPOB_PSEP7</name>
<proteinExistence type="inferred from homology"/>
<accession>A6UZI1</accession>
<comment type="function">
    <text evidence="1">DNA-dependent RNA polymerase catalyzes the transcription of DNA into RNA using the four ribonucleoside triphosphates as substrates.</text>
</comment>
<comment type="catalytic activity">
    <reaction evidence="1">
        <text>RNA(n) + a ribonucleoside 5'-triphosphate = RNA(n+1) + diphosphate</text>
        <dbReference type="Rhea" id="RHEA:21248"/>
        <dbReference type="Rhea" id="RHEA-COMP:14527"/>
        <dbReference type="Rhea" id="RHEA-COMP:17342"/>
        <dbReference type="ChEBI" id="CHEBI:33019"/>
        <dbReference type="ChEBI" id="CHEBI:61557"/>
        <dbReference type="ChEBI" id="CHEBI:140395"/>
        <dbReference type="EC" id="2.7.7.6"/>
    </reaction>
</comment>
<comment type="subunit">
    <text evidence="1">The RNAP catalytic core consists of 2 alpha, 1 beta, 1 beta' and 1 omega subunit. When a sigma factor is associated with the core the holoenzyme is formed, which can initiate transcription.</text>
</comment>
<comment type="similarity">
    <text evidence="1">Belongs to the RNA polymerase beta chain family.</text>
</comment>